<evidence type="ECO:0000250" key="1">
    <source>
        <dbReference type="UniProtKB" id="P61849"/>
    </source>
</evidence>
<evidence type="ECO:0000255" key="2"/>
<evidence type="ECO:0000269" key="3">
    <source>
    </source>
</evidence>
<evidence type="ECO:0000303" key="4">
    <source>
    </source>
</evidence>
<evidence type="ECO:0000305" key="5"/>
<evidence type="ECO:0000305" key="6">
    <source>
    </source>
</evidence>
<feature type="peptide" id="PRO_0000421713" description="Myosuppressin" evidence="3">
    <location>
        <begin position="1"/>
        <end position="10"/>
    </location>
</feature>
<feature type="modified residue" description="Pyrrolidone carboxylic acid" evidence="3">
    <location>
        <position position="1"/>
    </location>
</feature>
<feature type="modified residue" description="Phenylalanine amide" evidence="3">
    <location>
        <position position="10"/>
    </location>
</feature>
<dbReference type="GO" id="GO:0005576">
    <property type="term" value="C:extracellular region"/>
    <property type="evidence" value="ECO:0007669"/>
    <property type="project" value="UniProtKB-SubCell"/>
</dbReference>
<dbReference type="GO" id="GO:0007218">
    <property type="term" value="P:neuropeptide signaling pathway"/>
    <property type="evidence" value="ECO:0007669"/>
    <property type="project" value="UniProtKB-KW"/>
</dbReference>
<name>NEMS_KARBI</name>
<protein>
    <recommendedName>
        <fullName evidence="4">Myosuppressin</fullName>
        <shortName evidence="4">MS</shortName>
    </recommendedName>
</protein>
<sequence>QDVDHVFLRF</sequence>
<comment type="function">
    <text evidence="1">Myoinhibiting neuropeptide.</text>
</comment>
<comment type="subcellular location">
    <subcellularLocation>
        <location evidence="6">Secreted</location>
    </subcellularLocation>
</comment>
<comment type="similarity">
    <text evidence="2">Belongs to the myosuppressin family.</text>
</comment>
<organism>
    <name type="scientific">Karoophasma biedouwense</name>
    <name type="common">Gladiator</name>
    <name type="synonym">Heel-walker</name>
    <dbReference type="NCBI Taxonomy" id="253133"/>
    <lineage>
        <taxon>Eukaryota</taxon>
        <taxon>Metazoa</taxon>
        <taxon>Ecdysozoa</taxon>
        <taxon>Arthropoda</taxon>
        <taxon>Hexapoda</taxon>
        <taxon>Insecta</taxon>
        <taxon>Pterygota</taxon>
        <taxon>Neoptera</taxon>
        <taxon>Polyneoptera</taxon>
        <taxon>Mantophasmatodea</taxon>
        <taxon>Austrophasmatidae</taxon>
        <taxon>Karoophasma</taxon>
    </lineage>
</organism>
<keyword id="KW-0027">Amidation</keyword>
<keyword id="KW-0903">Direct protein sequencing</keyword>
<keyword id="KW-0527">Neuropeptide</keyword>
<keyword id="KW-0873">Pyrrolidone carboxylic acid</keyword>
<keyword id="KW-0964">Secreted</keyword>
<accession>B3A076</accession>
<reference evidence="5" key="1">
    <citation type="journal article" date="2012" name="Syst. Biol.">
        <title>Peptidomics-based phylogeny and biogeography of Mantophasmatodea (Hexapoda).</title>
        <authorList>
            <person name="Predel R."/>
            <person name="Neupert S."/>
            <person name="Huetteroth W."/>
            <person name="Kahnt J."/>
            <person name="Waidelich D."/>
            <person name="Roth S."/>
        </authorList>
    </citation>
    <scope>PROTEIN SEQUENCE</scope>
    <scope>PYROGLUTAMATE FORMATION AT GLN-1</scope>
    <scope>AMIDATION AT PHE-10</scope>
    <source>
        <tissue evidence="3">Corpora cardiaca</tissue>
    </source>
</reference>
<proteinExistence type="evidence at protein level"/>